<comment type="function">
    <text evidence="1 8 9 10">Capsid proteins self-assembles to form an icosahedral capsid with a T=1 symmetry, about 26 nm in diameter, and consisting of 60 copies of three size variants of the capsid proteins, VP1, and VP3, which differ by the presence of an N-terminal extension in the minor protein VP1 (Probable). The capsid has a channel at the 5-fold axis and there are densities extending the 5-fold axis into the interior of the capsid (PubMed:28331084). The capsid encapsulates the genomic ssDNA (Probable). Binding to the host receptors also induces capsid rearrangements leading to surface exposure of VP1 N-terminus, specifically its phospholipase A2-like region. The additional N-terminal region of isoform Minor capsid protein VP1, called VP1u, may serve as a lipolytic enzyme to breach the endosomal membrane during entry into host cell and might contribute to virus transport to the nucleus (By similarity).</text>
</comment>
<comment type="catalytic activity">
    <reaction evidence="3">
        <text>a 1,2-diacyl-sn-glycero-3-phosphocholine + H2O = a 1-acyl-sn-glycero-3-phosphocholine + a fatty acid + H(+)</text>
        <dbReference type="Rhea" id="RHEA:15801"/>
        <dbReference type="ChEBI" id="CHEBI:15377"/>
        <dbReference type="ChEBI" id="CHEBI:15378"/>
        <dbReference type="ChEBI" id="CHEBI:28868"/>
        <dbReference type="ChEBI" id="CHEBI:57643"/>
        <dbReference type="ChEBI" id="CHEBI:58168"/>
        <dbReference type="EC" id="3.1.1.4"/>
    </reaction>
</comment>
<comment type="subunit">
    <text evidence="4 8">Heteromultimer of isoform Minor capsid protein VP1, isoform Minor capsid protein VP2 and isoform Major capsid protein VP3 (PubMed:19244471). Isoform Major capsid protein VP3 is a homomultimer (PubMed:28331084). Isoform Major capsid protein VP3 is 10 fold more abundant than the minor capsid proteins VP1 and VP2 (PubMed:19244471).</text>
</comment>
<comment type="subcellular location">
    <molecule>Isoform Minor capsid protein VP1</molecule>
    <subcellularLocation>
        <location evidence="4">Virion</location>
    </subcellularLocation>
    <subcellularLocation>
        <location evidence="5">Host nucleus</location>
    </subcellularLocation>
    <subcellularLocation>
        <location evidence="5">Host cytoplasm</location>
    </subcellularLocation>
    <text evidence="5">Slightly detected in the cytoplasm, mainly seen in the nucleus.</text>
</comment>
<comment type="subcellular location">
    <molecule>Isoform Minor capsid protein VP2</molecule>
    <subcellularLocation>
        <location evidence="4">Virion</location>
    </subcellularLocation>
</comment>
<comment type="subcellular location">
    <molecule>Isoform Major capsid protein VP3</molecule>
    <subcellularLocation>
        <location evidence="4 8">Virion</location>
    </subcellularLocation>
    <subcellularLocation>
        <location evidence="5">Host nucleus</location>
    </subcellularLocation>
    <subcellularLocation>
        <location evidence="5">Host cytoplasm</location>
    </subcellularLocation>
    <text evidence="5">Slightly detected in the cytoplasm, mainly seen in the nucleus.</text>
</comment>
<comment type="alternative products">
    <event type="alternative initiation"/>
    <isoform>
        <id>Q3YPH4-1</id>
        <name>Minor capsid protein VP1</name>
        <sequence type="displayed"/>
    </isoform>
    <isoform>
        <id>Q3YPH4-2</id>
        <name>Minor capsid protein VP2</name>
        <sequence type="described" ref="VSP_059856 VSP_059863"/>
    </isoform>
    <isoform>
        <id>Q3YPH4-3</id>
        <name>Major capsid protein VP3</name>
        <sequence type="described" ref="VSP_059855"/>
    </isoform>
    <text evidence="4 7">The VP-encoding mRNA generates the three capsid proteins. Minor capsid protein VP1 and Major capsid protein VP3 initiate at canonical initiation site, whereas Minor capsid protein VP2 initiates at a GCT codon (PubMed:19244471, PubMed:26912614).</text>
</comment>
<comment type="domain">
    <text evidence="1 6">The N-terminus of Isoform Minor capsid protein VP1, VP1u, contains a phospholipase A2-like region (By similarity). VP1u may play a role in the disruption of host tight junctions in the airway tract (PubMed:25268969).</text>
</comment>
<comment type="domain">
    <text evidence="1">A nuclear localization signal is present in the C-terminus and can be recognized by cellular nuclear import molecules. After assembly, it is hidden because it is on the inner capsid surface.</text>
</comment>
<comment type="similarity">
    <text evidence="9">Belongs to the parvoviridae capsid protein family.</text>
</comment>
<comment type="caution">
    <text evidence="9">Isoform major capsid protein VP3 has former been designated as VP2.</text>
</comment>
<proteinExistence type="evidence at protein level"/>
<organism>
    <name type="scientific">Primate bocaparvovirus 1 (strain Human bocavirus 1 type 1)</name>
    <name type="common">HBoV1</name>
    <name type="synonym">Human bocavirus type 1</name>
    <dbReference type="NCBI Taxonomy" id="689403"/>
    <lineage>
        <taxon>Viruses</taxon>
        <taxon>Monodnaviria</taxon>
        <taxon>Shotokuvirae</taxon>
        <taxon>Cossaviricota</taxon>
        <taxon>Quintoviricetes</taxon>
        <taxon>Piccovirales</taxon>
        <taxon>Parvoviridae</taxon>
        <taxon>Parvovirinae</taxon>
        <taxon>Bocaparvovirus</taxon>
        <taxon>Bocaparvovirus primate1</taxon>
    </lineage>
</organism>
<dbReference type="EC" id="3.1.1.4" evidence="3"/>
<dbReference type="EMBL" id="DQ000496">
    <property type="protein sequence ID" value="AAY45702.1"/>
    <property type="molecule type" value="Genomic_DNA"/>
</dbReference>
<dbReference type="EMBL" id="DQ000496">
    <property type="protein sequence ID" value="AAY45703.1"/>
    <property type="molecule type" value="Genomic_DNA"/>
</dbReference>
<dbReference type="EMBL" id="KF385975">
    <property type="protein sequence ID" value="AGZ61939.1"/>
    <property type="molecule type" value="Genomic_DNA"/>
</dbReference>
<dbReference type="RefSeq" id="YP_338088.1">
    <property type="nucleotide sequence ID" value="NC_007455.1"/>
</dbReference>
<dbReference type="PDB" id="5URF">
    <property type="method" value="EM"/>
    <property type="resolution" value="2.90 A"/>
    <property type="chains" value="1/2/3/4/5/6/7/8/A/B/C/D/E/F/G/H/I/J/K/L/M/N/O/P/Q/R/S/T/U/V=9-550"/>
</dbReference>
<dbReference type="PDBsum" id="5URF"/>
<dbReference type="EMDB" id="EMD-8598"/>
<dbReference type="SMR" id="Q3YPH4"/>
<dbReference type="DNASU" id="3711587"/>
<dbReference type="DNASU" id="3711588"/>
<dbReference type="GeneID" id="3711587"/>
<dbReference type="KEGG" id="vg:3711587"/>
<dbReference type="KEGG" id="vg:3711588"/>
<dbReference type="Proteomes" id="UP000140113">
    <property type="component" value="Segment"/>
</dbReference>
<dbReference type="GO" id="GO:0030430">
    <property type="term" value="C:host cell cytoplasm"/>
    <property type="evidence" value="ECO:0007669"/>
    <property type="project" value="UniProtKB-SubCell"/>
</dbReference>
<dbReference type="GO" id="GO:0042025">
    <property type="term" value="C:host cell nucleus"/>
    <property type="evidence" value="ECO:0007669"/>
    <property type="project" value="UniProtKB-SubCell"/>
</dbReference>
<dbReference type="GO" id="GO:0039615">
    <property type="term" value="C:T=1 icosahedral viral capsid"/>
    <property type="evidence" value="ECO:0007669"/>
    <property type="project" value="UniProtKB-KW"/>
</dbReference>
<dbReference type="GO" id="GO:0019028">
    <property type="term" value="C:viral capsid"/>
    <property type="evidence" value="ECO:0000314"/>
    <property type="project" value="UniProtKB"/>
</dbReference>
<dbReference type="GO" id="GO:0004623">
    <property type="term" value="F:phospholipase A2 activity"/>
    <property type="evidence" value="ECO:0007669"/>
    <property type="project" value="UniProtKB-EC"/>
</dbReference>
<dbReference type="GO" id="GO:0005198">
    <property type="term" value="F:structural molecule activity"/>
    <property type="evidence" value="ECO:0007669"/>
    <property type="project" value="InterPro"/>
</dbReference>
<dbReference type="GO" id="GO:0016042">
    <property type="term" value="P:lipid catabolic process"/>
    <property type="evidence" value="ECO:0007669"/>
    <property type="project" value="UniProtKB-KW"/>
</dbReference>
<dbReference type="Gene3D" id="2.170.30.10">
    <property type="entry name" value="Parvovirus coat protein VP1/VP2"/>
    <property type="match status" value="1"/>
</dbReference>
<dbReference type="InterPro" id="IPR016184">
    <property type="entry name" value="Capsid/spike_ssDNA_virus"/>
</dbReference>
<dbReference type="InterPro" id="IPR001403">
    <property type="entry name" value="Parvovirus_coat"/>
</dbReference>
<dbReference type="InterPro" id="IPR013607">
    <property type="entry name" value="Phospholipase_A2-like"/>
</dbReference>
<dbReference type="InterPro" id="IPR036952">
    <property type="entry name" value="VP1/VP2"/>
</dbReference>
<dbReference type="Pfam" id="PF00740">
    <property type="entry name" value="Parvo_coat"/>
    <property type="match status" value="2"/>
</dbReference>
<dbReference type="Pfam" id="PF08398">
    <property type="entry name" value="Phospholip_A2_4"/>
    <property type="match status" value="1"/>
</dbReference>
<dbReference type="SUPFAM" id="SSF88645">
    <property type="entry name" value="ssDNA viruses"/>
    <property type="match status" value="1"/>
</dbReference>
<accession>Q3YPH4</accession>
<accession>Q3YPH3</accession>
<accession>U5XGX2</accession>
<protein>
    <recommendedName>
        <fullName>Minor capsid protein VP1</fullName>
        <ecNumber evidence="3">3.1.1.4</ecNumber>
    </recommendedName>
</protein>
<evidence type="ECO:0000250" key="1">
    <source>
        <dbReference type="UniProtKB" id="Q9PZT0"/>
    </source>
</evidence>
<evidence type="ECO:0000256" key="2">
    <source>
        <dbReference type="SAM" id="MobiDB-lite"/>
    </source>
</evidence>
<evidence type="ECO:0000269" key="3">
    <source>
    </source>
</evidence>
<evidence type="ECO:0000269" key="4">
    <source>
    </source>
</evidence>
<evidence type="ECO:0000269" key="5">
    <source>
    </source>
</evidence>
<evidence type="ECO:0000269" key="6">
    <source>
    </source>
</evidence>
<evidence type="ECO:0000269" key="7">
    <source>
    </source>
</evidence>
<evidence type="ECO:0000269" key="8">
    <source>
    </source>
</evidence>
<evidence type="ECO:0000305" key="9"/>
<evidence type="ECO:0000305" key="10">
    <source>
    </source>
</evidence>
<organismHost>
    <name type="scientific">Homo sapiens</name>
    <name type="common">Human</name>
    <dbReference type="NCBI Taxonomy" id="9606"/>
</organismHost>
<name>CAPSD_HBOC1</name>
<gene>
    <name type="primary">VP1</name>
</gene>
<feature type="chain" id="PRO_0000445381" description="Minor capsid protein VP1">
    <location>
        <begin position="1"/>
        <end position="671"/>
    </location>
</feature>
<feature type="region of interest" description="Phospholipase A2-like" evidence="3">
    <location>
        <begin position="11"/>
        <end position="66"/>
    </location>
</feature>
<feature type="region of interest" description="Disordered" evidence="2">
    <location>
        <begin position="106"/>
        <end position="161"/>
    </location>
</feature>
<feature type="short sequence motif" description="Nuclear localization signal" evidence="1">
    <location>
        <begin position="614"/>
        <end position="625"/>
    </location>
</feature>
<feature type="compositionally biased region" description="Polar residues" evidence="2">
    <location>
        <begin position="136"/>
        <end position="149"/>
    </location>
</feature>
<feature type="compositionally biased region" description="Gly residues" evidence="2">
    <location>
        <begin position="150"/>
        <end position="161"/>
    </location>
</feature>
<feature type="splice variant" id="VSP_059855" description="In isoform Major capsid protein VP3." evidence="7">
    <location>
        <begin position="1"/>
        <end position="129"/>
    </location>
</feature>
<feature type="splice variant" id="VSP_059856" description="In isoform Minor capsid protein VP2." evidence="7">
    <location>
        <begin position="1"/>
        <end position="90"/>
    </location>
</feature>
<feature type="splice variant" id="VSP_059863" description="In isoform Minor capsid protein VP2.">
    <original>V</original>
    <variation>M</variation>
    <location>
        <position position="91"/>
    </location>
</feature>
<feature type="mutagenesis site" description="Almost complete loss of phospholipase A2-like activity." evidence="3">
    <original>P</original>
    <variation>R</variation>
    <location>
        <position position="21"/>
    </location>
</feature>
<feature type="mutagenesis site" description="Almost complete loss of phospholipase A2-like activity." evidence="3">
    <original>H</original>
    <variation>A</variation>
    <location>
        <position position="41"/>
    </location>
</feature>
<feature type="mutagenesis site" description="Almost complete loss of phospholipase A2-like activity." evidence="3">
    <original>D</original>
    <variation>N</variation>
    <location>
        <position position="42"/>
    </location>
</feature>
<feature type="mutagenesis site" description="Almost complete loss of phospholipase A2-like activity." evidence="3">
    <original>D</original>
    <variation>A</variation>
    <location>
        <position position="63"/>
    </location>
</feature>
<sequence length="671" mass="75085">MPPIKRQPRGWVLPGYRYLGPFNPLDNGEPVNNADRAAQLHDHAYSELIKSGKNPYLYFNKADEKFIDDLKDDWSIGGIIGSSFFKIKRAVAPALGNKERAQKRHFYFANSNKGAKKTKKSEPKPGTSKMSDTDIQDQQPDTVDAPQNTSGGGTGSIGGGKGSGVGISTGGWVGGSHFSDKYVVTKNTRQFITTIQNGHLYKTEAIETTNQSGKSQRCVTTPWTYFNFNQYSCHFSPQDWQRLTNEYKRFRPKAMQVKIYNLQIKQILSNGADTTYNNDLTAGVHIFCDGEHAYPNASHPWDEDVMPDLPYKTWKLFQYGYIPIENELADLDGNAAGGNATEKALLYQMPFFLLENSDHQVLRTGESTEFTFNFDCEWVNNERAYIPPGLMFNPKVPTRRVQYIRQNGSTAASTGRIQPYSKPTSWMTGPGLLSAQRVGPQSSDTAPFMVCTNPEGTHINTGAAGFGSGFDPPNGCLAPTNLEYKLQWYQTPEGTGNNGNIIANPSLSMLRDQLLYKGNQTTYNLVGDIWMFPNQVWDRFPITRENPIWCKKPRADKHTIMDPFDGSIAMDHPPGTIFIKMAKIPVPTASNADSYLNIYCTGQVSCEIVWEVERYATKNWRPERRHTALGMSLGGESNYTPTYHVDPTGAYIQPTSYDQCMPVKTNINKVL</sequence>
<keyword id="KW-0002">3D-structure</keyword>
<keyword id="KW-0024">Alternative initiation</keyword>
<keyword id="KW-0167">Capsid protein</keyword>
<keyword id="KW-1035">Host cytoplasm</keyword>
<keyword id="KW-1048">Host nucleus</keyword>
<keyword id="KW-0378">Hydrolase</keyword>
<keyword id="KW-0442">Lipid degradation</keyword>
<keyword id="KW-0443">Lipid metabolism</keyword>
<keyword id="KW-1185">Reference proteome</keyword>
<keyword id="KW-1140">T=1 icosahedral capsid protein</keyword>
<keyword id="KW-0946">Virion</keyword>
<reference key="1">
    <citation type="journal article" date="2005" name="Proc. Natl. Acad. Sci. U.S.A.">
        <title>Cloning of a human parvovirus by molecular screening of respiratory tract samples.</title>
        <authorList>
            <person name="Allander T."/>
            <person name="Tammi M.T."/>
            <person name="Eriksson M."/>
            <person name="Bjerkner A."/>
            <person name="Tiveljung-Lindell A."/>
            <person name="Andersson B."/>
        </authorList>
    </citation>
    <scope>NUCLEOTIDE SEQUENCE [LARGE SCALE GENOMIC DNA] (ISOFORMS MINOR CAPSID PROTEIN VP1 AND MAJOR CAPSID PROTEIN VP3)</scope>
    <source>
        <strain>St2</strain>
    </source>
</reference>
<reference key="2">
    <citation type="submission" date="2013-07" db="EMBL/GenBank/DDBJ databases">
        <title>Human bocavirus infection in child with Bronchopulmonary dysplasia.</title>
        <authorList>
            <person name="Ursic T."/>
            <person name="Petrovec M."/>
        </authorList>
    </citation>
    <scope>NUCLEOTIDE SEQUENCE [GENOMIC DNA] OF 122-671</scope>
</reference>
<reference key="3">
    <citation type="journal article" date="2008" name="Biochem. Biophys. Res. Commun.">
        <title>Phospholipase A2-like activity of human bocavirus VP1 unique region.</title>
        <authorList>
            <person name="Qu X.W."/>
            <person name="Liu W.P."/>
            <person name="Qi Z.Y."/>
            <person name="Duan Z.J."/>
            <person name="Zheng L.S."/>
            <person name="Kuang Z.Z."/>
            <person name="Zhang W.J."/>
            <person name="Hou Y.D."/>
        </authorList>
    </citation>
    <scope>DOMAIN</scope>
    <scope>MUTAGENESIS OF PRO-21; HIS-41; ASP-42 AND ASP-63</scope>
    <scope>CATALYTIC ACTIVITY</scope>
</reference>
<reference key="4">
    <citation type="journal article" date="2009" name="Clin. Vaccine Immunol.">
        <title>Evidence of prior exposure to human bocavirus as determined by a retrospective serological study of 404 serum samples from adults in the United States.</title>
        <authorList>
            <person name="Cecchini S."/>
            <person name="Negrete A."/>
            <person name="Virag T."/>
            <person name="Graham B.S."/>
            <person name="Cohen J.I."/>
            <person name="Kotin R.M."/>
        </authorList>
    </citation>
    <scope>SUBUNIT</scope>
    <scope>ALTERNATIVE INITIATION</scope>
    <scope>SUBCELLULAR LOCATION</scope>
</reference>
<reference key="5">
    <citation type="journal article" date="2010" name="Virology">
        <title>Characterization of the gene expression profile of human bocavirus.</title>
        <authorList>
            <person name="Chen A.Y."/>
            <person name="Cheng F."/>
            <person name="Lou S."/>
            <person name="Luo Y."/>
            <person name="Liu Z."/>
            <person name="Delwart E."/>
            <person name="Pintel D."/>
            <person name="Qiu J."/>
        </authorList>
    </citation>
    <scope>SUBCELLULAR LOCATION</scope>
</reference>
<reference key="6">
    <citation type="journal article" date="2014" name="PLoS ONE">
        <title>Effects of human Parvovirus B19 and Bocavirus VP1 unique region on tight junction of human airway epithelial A549 cells.</title>
        <authorList>
            <person name="Chiu C.C."/>
            <person name="Shi Y.F."/>
            <person name="Yang J.J."/>
            <person name="Hsiao Y.C."/>
            <person name="Tzang B.S."/>
            <person name="Hsu T.C."/>
        </authorList>
    </citation>
    <scope>DOMAIN</scope>
</reference>
<reference key="7">
    <citation type="journal article" date="2016" name="J. Virol.">
        <title>Nonstructural Protein NP1 of Human Bocavirus 1 Plays a Critical Role in the Expression of Viral Capsid Proteins.</title>
        <authorList>
            <person name="Zou W."/>
            <person name="Cheng F."/>
            <person name="Shen W."/>
            <person name="Engelhardt J.F."/>
            <person name="Yan Z."/>
            <person name="Qiu J."/>
        </authorList>
    </citation>
    <scope>ALTERNATIVE INITIATION</scope>
</reference>
<reference key="8">
    <citation type="journal article" date="2017" name="J. Virol.">
        <title>Structural Insights into Human Bocaparvoviruses.</title>
        <authorList>
            <person name="Mietzsch M."/>
            <person name="Kailasan S."/>
            <person name="Garrison J."/>
            <person name="Ilyas M."/>
            <person name="Chipman P."/>
            <person name="Kantola K."/>
            <person name="Janssen M.E."/>
            <person name="Spear J."/>
            <person name="Sousa D."/>
            <person name="McKenna R."/>
            <person name="Brown K."/>
            <person name="Soderlund-Venermo M."/>
            <person name="Baker T."/>
            <person name="Agbandje-McKenna M."/>
        </authorList>
    </citation>
    <scope>STRUCTURE BY ELECTRON MICROSCOPY (2.90 ANGSTROMS) OF 130-671</scope>
    <scope>FUNCTION</scope>
    <scope>SUBUNIT</scope>
    <scope>SUBCELLULAR LOCATION</scope>
</reference>